<keyword id="KW-0002">3D-structure</keyword>
<keyword id="KW-1003">Cell membrane</keyword>
<keyword id="KW-0472">Membrane</keyword>
<keyword id="KW-1185">Reference proteome</keyword>
<keyword id="KW-0812">Transmembrane</keyword>
<keyword id="KW-1133">Transmembrane helix</keyword>
<gene>
    <name type="primary">yetF</name>
    <name type="ordered locus">BSU07140</name>
</gene>
<name>YETF_BACSU</name>
<feature type="chain" id="PRO_0000360518" description="UPF0702 transmembrane protein YetF">
    <location>
        <begin position="1"/>
        <end position="231"/>
    </location>
</feature>
<feature type="transmembrane region" description="Helical" evidence="1">
    <location>
        <begin position="5"/>
        <end position="25"/>
    </location>
</feature>
<feature type="transmembrane region" description="Helical" evidence="1">
    <location>
        <begin position="33"/>
        <end position="53"/>
    </location>
</feature>
<feature type="transmembrane region" description="Helical" evidence="1">
    <location>
        <begin position="59"/>
        <end position="79"/>
    </location>
</feature>
<feature type="strand" evidence="3">
    <location>
        <begin position="95"/>
        <end position="99"/>
    </location>
</feature>
<feature type="helix" evidence="3">
    <location>
        <begin position="105"/>
        <end position="110"/>
    </location>
</feature>
<feature type="helix" evidence="3">
    <location>
        <begin position="115"/>
        <end position="124"/>
    </location>
</feature>
<feature type="helix" evidence="3">
    <location>
        <begin position="130"/>
        <end position="132"/>
    </location>
</feature>
<feature type="strand" evidence="3">
    <location>
        <begin position="133"/>
        <end position="138"/>
    </location>
</feature>
<feature type="strand" evidence="3">
    <location>
        <begin position="144"/>
        <end position="148"/>
    </location>
</feature>
<feature type="helix" evidence="3">
    <location>
        <begin position="150"/>
        <end position="152"/>
    </location>
</feature>
<feature type="turn" evidence="3">
    <location>
        <begin position="157"/>
        <end position="161"/>
    </location>
</feature>
<feature type="strand" evidence="3">
    <location>
        <begin position="171"/>
        <end position="175"/>
    </location>
</feature>
<feature type="helix" evidence="3">
    <location>
        <begin position="181"/>
        <end position="187"/>
    </location>
</feature>
<feature type="helix" evidence="3">
    <location>
        <begin position="191"/>
        <end position="200"/>
    </location>
</feature>
<feature type="helix" evidence="3">
    <location>
        <begin position="206"/>
        <end position="208"/>
    </location>
</feature>
<feature type="strand" evidence="3">
    <location>
        <begin position="209"/>
        <end position="214"/>
    </location>
</feature>
<feature type="strand" evidence="3">
    <location>
        <begin position="221"/>
        <end position="224"/>
    </location>
</feature>
<feature type="turn" evidence="3">
    <location>
        <begin position="225"/>
        <end position="229"/>
    </location>
</feature>
<evidence type="ECO:0000255" key="1"/>
<evidence type="ECO:0000305" key="2"/>
<evidence type="ECO:0007829" key="3">
    <source>
        <dbReference type="PDB" id="3C6F"/>
    </source>
</evidence>
<comment type="subcellular location">
    <subcellularLocation>
        <location evidence="2">Cell membrane</location>
        <topology evidence="2">Multi-pass membrane protein</topology>
    </subcellularLocation>
</comment>
<comment type="similarity">
    <text evidence="2">Belongs to the UPF0702 family.</text>
</comment>
<proteinExistence type="evidence at protein level"/>
<protein>
    <recommendedName>
        <fullName>UPF0702 transmembrane protein YetF</fullName>
    </recommendedName>
</protein>
<organism>
    <name type="scientific">Bacillus subtilis (strain 168)</name>
    <dbReference type="NCBI Taxonomy" id="224308"/>
    <lineage>
        <taxon>Bacteria</taxon>
        <taxon>Bacillati</taxon>
        <taxon>Bacillota</taxon>
        <taxon>Bacilli</taxon>
        <taxon>Bacillales</taxon>
        <taxon>Bacillaceae</taxon>
        <taxon>Bacillus</taxon>
    </lineage>
</organism>
<sequence length="231" mass="26310">MGNYLSVAVELVCGLGILFIILKLLGKTQFSQITPFDFISALILGELVGNAVYDHEIKIKEIIFASLLWGVLIYIIEFITQKMKSSRKFLEGEPNIVIRKGELQYKVMKKNKIDINQLQSLLRQAGSFSIQEVEYAILETNGMVSVLPKSDFDKPTNKDLQIPSKSVSLPITLIIDGEIVRDNLKEAGVDEQWLKQELKKKNIDKTEDVLFAEWHKNKPLYTVTYEQSRST</sequence>
<accession>O31533</accession>
<reference key="1">
    <citation type="journal article" date="1997" name="Nature">
        <title>The complete genome sequence of the Gram-positive bacterium Bacillus subtilis.</title>
        <authorList>
            <person name="Kunst F."/>
            <person name="Ogasawara N."/>
            <person name="Moszer I."/>
            <person name="Albertini A.M."/>
            <person name="Alloni G."/>
            <person name="Azevedo V."/>
            <person name="Bertero M.G."/>
            <person name="Bessieres P."/>
            <person name="Bolotin A."/>
            <person name="Borchert S."/>
            <person name="Borriss R."/>
            <person name="Boursier L."/>
            <person name="Brans A."/>
            <person name="Braun M."/>
            <person name="Brignell S.C."/>
            <person name="Bron S."/>
            <person name="Brouillet S."/>
            <person name="Bruschi C.V."/>
            <person name="Caldwell B."/>
            <person name="Capuano V."/>
            <person name="Carter N.M."/>
            <person name="Choi S.-K."/>
            <person name="Codani J.-J."/>
            <person name="Connerton I.F."/>
            <person name="Cummings N.J."/>
            <person name="Daniel R.A."/>
            <person name="Denizot F."/>
            <person name="Devine K.M."/>
            <person name="Duesterhoeft A."/>
            <person name="Ehrlich S.D."/>
            <person name="Emmerson P.T."/>
            <person name="Entian K.-D."/>
            <person name="Errington J."/>
            <person name="Fabret C."/>
            <person name="Ferrari E."/>
            <person name="Foulger D."/>
            <person name="Fritz C."/>
            <person name="Fujita M."/>
            <person name="Fujita Y."/>
            <person name="Fuma S."/>
            <person name="Galizzi A."/>
            <person name="Galleron N."/>
            <person name="Ghim S.-Y."/>
            <person name="Glaser P."/>
            <person name="Goffeau A."/>
            <person name="Golightly E.J."/>
            <person name="Grandi G."/>
            <person name="Guiseppi G."/>
            <person name="Guy B.J."/>
            <person name="Haga K."/>
            <person name="Haiech J."/>
            <person name="Harwood C.R."/>
            <person name="Henaut A."/>
            <person name="Hilbert H."/>
            <person name="Holsappel S."/>
            <person name="Hosono S."/>
            <person name="Hullo M.-F."/>
            <person name="Itaya M."/>
            <person name="Jones L.-M."/>
            <person name="Joris B."/>
            <person name="Karamata D."/>
            <person name="Kasahara Y."/>
            <person name="Klaerr-Blanchard M."/>
            <person name="Klein C."/>
            <person name="Kobayashi Y."/>
            <person name="Koetter P."/>
            <person name="Koningstein G."/>
            <person name="Krogh S."/>
            <person name="Kumano M."/>
            <person name="Kurita K."/>
            <person name="Lapidus A."/>
            <person name="Lardinois S."/>
            <person name="Lauber J."/>
            <person name="Lazarevic V."/>
            <person name="Lee S.-M."/>
            <person name="Levine A."/>
            <person name="Liu H."/>
            <person name="Masuda S."/>
            <person name="Mauel C."/>
            <person name="Medigue C."/>
            <person name="Medina N."/>
            <person name="Mellado R.P."/>
            <person name="Mizuno M."/>
            <person name="Moestl D."/>
            <person name="Nakai S."/>
            <person name="Noback M."/>
            <person name="Noone D."/>
            <person name="O'Reilly M."/>
            <person name="Ogawa K."/>
            <person name="Ogiwara A."/>
            <person name="Oudega B."/>
            <person name="Park S.-H."/>
            <person name="Parro V."/>
            <person name="Pohl T.M."/>
            <person name="Portetelle D."/>
            <person name="Porwollik S."/>
            <person name="Prescott A.M."/>
            <person name="Presecan E."/>
            <person name="Pujic P."/>
            <person name="Purnelle B."/>
            <person name="Rapoport G."/>
            <person name="Rey M."/>
            <person name="Reynolds S."/>
            <person name="Rieger M."/>
            <person name="Rivolta C."/>
            <person name="Rocha E."/>
            <person name="Roche B."/>
            <person name="Rose M."/>
            <person name="Sadaie Y."/>
            <person name="Sato T."/>
            <person name="Scanlan E."/>
            <person name="Schleich S."/>
            <person name="Schroeter R."/>
            <person name="Scoffone F."/>
            <person name="Sekiguchi J."/>
            <person name="Sekowska A."/>
            <person name="Seror S.J."/>
            <person name="Serror P."/>
            <person name="Shin B.-S."/>
            <person name="Soldo B."/>
            <person name="Sorokin A."/>
            <person name="Tacconi E."/>
            <person name="Takagi T."/>
            <person name="Takahashi H."/>
            <person name="Takemaru K."/>
            <person name="Takeuchi M."/>
            <person name="Tamakoshi A."/>
            <person name="Tanaka T."/>
            <person name="Terpstra P."/>
            <person name="Tognoni A."/>
            <person name="Tosato V."/>
            <person name="Uchiyama S."/>
            <person name="Vandenbol M."/>
            <person name="Vannier F."/>
            <person name="Vassarotti A."/>
            <person name="Viari A."/>
            <person name="Wambutt R."/>
            <person name="Wedler E."/>
            <person name="Wedler H."/>
            <person name="Weitzenegger T."/>
            <person name="Winters P."/>
            <person name="Wipat A."/>
            <person name="Yamamoto H."/>
            <person name="Yamane K."/>
            <person name="Yasumoto K."/>
            <person name="Yata K."/>
            <person name="Yoshida K."/>
            <person name="Yoshikawa H.-F."/>
            <person name="Zumstein E."/>
            <person name="Yoshikawa H."/>
            <person name="Danchin A."/>
        </authorList>
    </citation>
    <scope>NUCLEOTIDE SEQUENCE [LARGE SCALE GENOMIC DNA]</scope>
    <source>
        <strain>168</strain>
    </source>
</reference>
<dbReference type="EMBL" id="AL009126">
    <property type="protein sequence ID" value="CAB12533.1"/>
    <property type="molecule type" value="Genomic_DNA"/>
</dbReference>
<dbReference type="PIR" id="C69798">
    <property type="entry name" value="C69798"/>
</dbReference>
<dbReference type="RefSeq" id="NP_388595.1">
    <property type="nucleotide sequence ID" value="NC_000964.3"/>
</dbReference>
<dbReference type="RefSeq" id="WP_003233805.1">
    <property type="nucleotide sequence ID" value="NZ_OZ025638.1"/>
</dbReference>
<dbReference type="PDB" id="3C6F">
    <property type="method" value="X-ray"/>
    <property type="resolution" value="2.50 A"/>
    <property type="chains" value="A/B/C/D=81-231"/>
</dbReference>
<dbReference type="PDBsum" id="3C6F"/>
<dbReference type="SMR" id="O31533"/>
<dbReference type="FunCoup" id="O31533">
    <property type="interactions" value="18"/>
</dbReference>
<dbReference type="STRING" id="224308.BSU07140"/>
<dbReference type="PaxDb" id="224308-BSU07140"/>
<dbReference type="DNASU" id="936086"/>
<dbReference type="EnsemblBacteria" id="CAB12533">
    <property type="protein sequence ID" value="CAB12533"/>
    <property type="gene ID" value="BSU_07140"/>
</dbReference>
<dbReference type="GeneID" id="936086"/>
<dbReference type="KEGG" id="bsu:BSU07140"/>
<dbReference type="PATRIC" id="fig|224308.179.peg.774"/>
<dbReference type="eggNOG" id="COG2323">
    <property type="taxonomic scope" value="Bacteria"/>
</dbReference>
<dbReference type="InParanoid" id="O31533"/>
<dbReference type="OrthoDB" id="1076133at2"/>
<dbReference type="PhylomeDB" id="O31533"/>
<dbReference type="BioCyc" id="BSUB:BSU07140-MONOMER"/>
<dbReference type="EvolutionaryTrace" id="O31533"/>
<dbReference type="Proteomes" id="UP000001570">
    <property type="component" value="Chromosome"/>
</dbReference>
<dbReference type="GO" id="GO:0005886">
    <property type="term" value="C:plasma membrane"/>
    <property type="evidence" value="ECO:0007669"/>
    <property type="project" value="UniProtKB-SubCell"/>
</dbReference>
<dbReference type="Gene3D" id="3.30.240.20">
    <property type="entry name" value="bsu07140 like domains"/>
    <property type="match status" value="2"/>
</dbReference>
<dbReference type="InterPro" id="IPR007353">
    <property type="entry name" value="DUF421"/>
</dbReference>
<dbReference type="InterPro" id="IPR023090">
    <property type="entry name" value="UPF0702_alpha/beta_dom_sf"/>
</dbReference>
<dbReference type="InterPro" id="IPR048454">
    <property type="entry name" value="YetF_N"/>
</dbReference>
<dbReference type="PANTHER" id="PTHR34582">
    <property type="entry name" value="UPF0702 TRANSMEMBRANE PROTEIN YCAP"/>
    <property type="match status" value="1"/>
</dbReference>
<dbReference type="PANTHER" id="PTHR34582:SF5">
    <property type="entry name" value="UPF0702 TRANSMEMBRANE PROTEIN YETF"/>
    <property type="match status" value="1"/>
</dbReference>
<dbReference type="Pfam" id="PF04239">
    <property type="entry name" value="DUF421"/>
    <property type="match status" value="1"/>
</dbReference>
<dbReference type="Pfam" id="PF20730">
    <property type="entry name" value="YetF_N"/>
    <property type="match status" value="1"/>
</dbReference>